<feature type="chain" id="PRO_0000383385" description="Ribosomal RNA small subunit methyltransferase J">
    <location>
        <begin position="1"/>
        <end position="204"/>
    </location>
</feature>
<feature type="binding site" evidence="1">
    <location>
        <begin position="55"/>
        <end position="56"/>
    </location>
    <ligand>
        <name>S-adenosyl-L-methionine</name>
        <dbReference type="ChEBI" id="CHEBI:59789"/>
    </ligand>
</feature>
<feature type="binding site" evidence="1">
    <location>
        <begin position="71"/>
        <end position="72"/>
    </location>
    <ligand>
        <name>S-adenosyl-L-methionine</name>
        <dbReference type="ChEBI" id="CHEBI:59789"/>
    </ligand>
</feature>
<feature type="binding site" evidence="1">
    <location>
        <position position="123"/>
    </location>
    <ligand>
        <name>S-adenosyl-L-methionine</name>
        <dbReference type="ChEBI" id="CHEBI:59789"/>
    </ligand>
</feature>
<sequence length="204" mass="21677">MAETARTAPAVDFVGGAVGYRFRTQAGRSHALLKATGLSPTRSLHVIDATAGLGRDAFLLASMGATVTLIERVPEVHALLADALEAARAESDELAAIIGRMTLLHGDARVLLPTLQADVITIDPMHPPRTKTALVKQEMRLLRDLVGADPDVGELLAAALSADCGRVVLKWPLRAAAPPASRKPSHQIAGKTVRYDVYVRPRAT</sequence>
<reference key="1">
    <citation type="submission" date="2008-05" db="EMBL/GenBank/DDBJ databases">
        <title>Complete sequence of Rhodopseudomonas palustris TIE-1.</title>
        <authorList>
            <consortium name="US DOE Joint Genome Institute"/>
            <person name="Lucas S."/>
            <person name="Copeland A."/>
            <person name="Lapidus A."/>
            <person name="Glavina del Rio T."/>
            <person name="Dalin E."/>
            <person name="Tice H."/>
            <person name="Pitluck S."/>
            <person name="Chain P."/>
            <person name="Malfatti S."/>
            <person name="Shin M."/>
            <person name="Vergez L."/>
            <person name="Lang D."/>
            <person name="Schmutz J."/>
            <person name="Larimer F."/>
            <person name="Land M."/>
            <person name="Hauser L."/>
            <person name="Kyrpides N."/>
            <person name="Mikhailova N."/>
            <person name="Emerson D."/>
            <person name="Newman D.K."/>
            <person name="Roden E."/>
            <person name="Richardson P."/>
        </authorList>
    </citation>
    <scope>NUCLEOTIDE SEQUENCE [LARGE SCALE GENOMIC DNA]</scope>
    <source>
        <strain>TIE-1</strain>
    </source>
</reference>
<protein>
    <recommendedName>
        <fullName evidence="1">Ribosomal RNA small subunit methyltransferase J</fullName>
        <ecNumber evidence="1">2.1.1.242</ecNumber>
    </recommendedName>
    <alternativeName>
        <fullName evidence="1">16S rRNA m2G1516 methyltransferase</fullName>
    </alternativeName>
    <alternativeName>
        <fullName evidence="1">rRNA (guanine-N(2)-)-methyltransferase</fullName>
    </alternativeName>
</protein>
<proteinExistence type="inferred from homology"/>
<evidence type="ECO:0000255" key="1">
    <source>
        <dbReference type="HAMAP-Rule" id="MF_01523"/>
    </source>
</evidence>
<accession>B3QEZ3</accession>
<name>RSMJ_RHOPT</name>
<keyword id="KW-0963">Cytoplasm</keyword>
<keyword id="KW-0489">Methyltransferase</keyword>
<keyword id="KW-0698">rRNA processing</keyword>
<keyword id="KW-0949">S-adenosyl-L-methionine</keyword>
<keyword id="KW-0808">Transferase</keyword>
<gene>
    <name evidence="1" type="primary">rsmJ</name>
    <name type="ordered locus">Rpal_4001</name>
</gene>
<organism>
    <name type="scientific">Rhodopseudomonas palustris (strain TIE-1)</name>
    <dbReference type="NCBI Taxonomy" id="395960"/>
    <lineage>
        <taxon>Bacteria</taxon>
        <taxon>Pseudomonadati</taxon>
        <taxon>Pseudomonadota</taxon>
        <taxon>Alphaproteobacteria</taxon>
        <taxon>Hyphomicrobiales</taxon>
        <taxon>Nitrobacteraceae</taxon>
        <taxon>Rhodopseudomonas</taxon>
    </lineage>
</organism>
<comment type="function">
    <text evidence="1">Specifically methylates the guanosine in position 1516 of 16S rRNA.</text>
</comment>
<comment type="catalytic activity">
    <reaction evidence="1">
        <text>guanosine(1516) in 16S rRNA + S-adenosyl-L-methionine = N(2)-methylguanosine(1516) in 16S rRNA + S-adenosyl-L-homocysteine + H(+)</text>
        <dbReference type="Rhea" id="RHEA:43220"/>
        <dbReference type="Rhea" id="RHEA-COMP:10412"/>
        <dbReference type="Rhea" id="RHEA-COMP:10413"/>
        <dbReference type="ChEBI" id="CHEBI:15378"/>
        <dbReference type="ChEBI" id="CHEBI:57856"/>
        <dbReference type="ChEBI" id="CHEBI:59789"/>
        <dbReference type="ChEBI" id="CHEBI:74269"/>
        <dbReference type="ChEBI" id="CHEBI:74481"/>
        <dbReference type="EC" id="2.1.1.242"/>
    </reaction>
</comment>
<comment type="subcellular location">
    <subcellularLocation>
        <location evidence="1">Cytoplasm</location>
    </subcellularLocation>
</comment>
<comment type="similarity">
    <text evidence="1">Belongs to the methyltransferase superfamily. RsmJ family.</text>
</comment>
<dbReference type="EC" id="2.1.1.242" evidence="1"/>
<dbReference type="EMBL" id="CP001096">
    <property type="protein sequence ID" value="ACF02497.1"/>
    <property type="molecule type" value="Genomic_DNA"/>
</dbReference>
<dbReference type="RefSeq" id="WP_012496927.1">
    <property type="nucleotide sequence ID" value="NC_011004.1"/>
</dbReference>
<dbReference type="SMR" id="B3QEZ3"/>
<dbReference type="KEGG" id="rpt:Rpal_4001"/>
<dbReference type="HOGENOM" id="CLU_076324_0_0_5"/>
<dbReference type="OrthoDB" id="3191794at2"/>
<dbReference type="Proteomes" id="UP000001725">
    <property type="component" value="Chromosome"/>
</dbReference>
<dbReference type="GO" id="GO:0005737">
    <property type="term" value="C:cytoplasm"/>
    <property type="evidence" value="ECO:0007669"/>
    <property type="project" value="UniProtKB-SubCell"/>
</dbReference>
<dbReference type="GO" id="GO:0008990">
    <property type="term" value="F:rRNA (guanine-N2-)-methyltransferase activity"/>
    <property type="evidence" value="ECO:0007669"/>
    <property type="project" value="UniProtKB-UniRule"/>
</dbReference>
<dbReference type="Gene3D" id="3.40.50.150">
    <property type="entry name" value="Vaccinia Virus protein VP39"/>
    <property type="match status" value="1"/>
</dbReference>
<dbReference type="HAMAP" id="MF_01523">
    <property type="entry name" value="16SrRNA_methyltr_J"/>
    <property type="match status" value="1"/>
</dbReference>
<dbReference type="InterPro" id="IPR007536">
    <property type="entry name" value="16SrRNA_methylTrfase_J"/>
</dbReference>
<dbReference type="InterPro" id="IPR029063">
    <property type="entry name" value="SAM-dependent_MTases_sf"/>
</dbReference>
<dbReference type="PANTHER" id="PTHR36112">
    <property type="entry name" value="RIBOSOMAL RNA SMALL SUBUNIT METHYLTRANSFERASE J"/>
    <property type="match status" value="1"/>
</dbReference>
<dbReference type="PANTHER" id="PTHR36112:SF1">
    <property type="entry name" value="RIBOSOMAL RNA SMALL SUBUNIT METHYLTRANSFERASE J"/>
    <property type="match status" value="1"/>
</dbReference>
<dbReference type="Pfam" id="PF04445">
    <property type="entry name" value="SAM_MT"/>
    <property type="match status" value="1"/>
</dbReference>
<dbReference type="SUPFAM" id="SSF53335">
    <property type="entry name" value="S-adenosyl-L-methionine-dependent methyltransferases"/>
    <property type="match status" value="1"/>
</dbReference>